<protein>
    <recommendedName>
        <fullName evidence="2">Adipose-secreted signaling protein</fullName>
    </recommendedName>
</protein>
<feature type="chain" id="PRO_0000359755" description="Adipose-secreted signaling protein">
    <location>
        <begin position="1"/>
        <end position="176"/>
    </location>
</feature>
<feature type="region of interest" description="Disordered" evidence="3">
    <location>
        <begin position="1"/>
        <end position="30"/>
    </location>
</feature>
<feature type="compositionally biased region" description="Polar residues" evidence="3">
    <location>
        <begin position="20"/>
        <end position="30"/>
    </location>
</feature>
<keyword id="KW-1185">Reference proteome</keyword>
<name>ADSSP_TAEGU</name>
<gene>
    <name evidence="2" type="primary">adissp</name>
</gene>
<sequence>MATAGKGSKGKGTGVRFTPEGTQGHPQEGTQGHVHFQEQLHDSAVMVTQDKDGHFLVKVGFLKILHKYEITFQLPPVPNLGKDVCPLPVPNPNLRIISVTSLPEGHNVRCEYTAHKEGVLKEELLLAGHSPTHIKVTVQARVMDRHHGTPMLLDGVRCVGAELEYDSEQSDWHGFD</sequence>
<accession>B5FX50</accession>
<proteinExistence type="evidence at transcript level"/>
<organism>
    <name type="scientific">Taeniopygia guttata</name>
    <name type="common">Zebra finch</name>
    <name type="synonym">Poephila guttata</name>
    <dbReference type="NCBI Taxonomy" id="59729"/>
    <lineage>
        <taxon>Eukaryota</taxon>
        <taxon>Metazoa</taxon>
        <taxon>Chordata</taxon>
        <taxon>Craniata</taxon>
        <taxon>Vertebrata</taxon>
        <taxon>Euteleostomi</taxon>
        <taxon>Archelosauria</taxon>
        <taxon>Archosauria</taxon>
        <taxon>Dinosauria</taxon>
        <taxon>Saurischia</taxon>
        <taxon>Theropoda</taxon>
        <taxon>Coelurosauria</taxon>
        <taxon>Aves</taxon>
        <taxon>Neognathae</taxon>
        <taxon>Neoaves</taxon>
        <taxon>Telluraves</taxon>
        <taxon>Australaves</taxon>
        <taxon>Passeriformes</taxon>
        <taxon>Passeroidea</taxon>
        <taxon>Estrildidae</taxon>
        <taxon>Estrildinae</taxon>
        <taxon>Taeniopygia</taxon>
    </lineage>
</organism>
<comment type="function">
    <text evidence="1">May be involved in thermogenesis and glucose homeostasis.</text>
</comment>
<comment type="similarity">
    <text evidence="4">Belongs to the ADISSP family.</text>
</comment>
<evidence type="ECO:0000250" key="1">
    <source>
        <dbReference type="UniProtKB" id="Q9D1K7"/>
    </source>
</evidence>
<evidence type="ECO:0000250" key="2">
    <source>
        <dbReference type="UniProtKB" id="Q9GZN8"/>
    </source>
</evidence>
<evidence type="ECO:0000256" key="3">
    <source>
        <dbReference type="SAM" id="MobiDB-lite"/>
    </source>
</evidence>
<evidence type="ECO:0000305" key="4"/>
<dbReference type="EMBL" id="DQ213065">
    <property type="protein sequence ID" value="ACH43611.1"/>
    <property type="molecule type" value="mRNA"/>
</dbReference>
<dbReference type="RefSeq" id="NP_001232719.1">
    <property type="nucleotide sequence ID" value="NM_001245790.1"/>
</dbReference>
<dbReference type="STRING" id="59729.ENSTGUP00000037725"/>
<dbReference type="Ensembl" id="ENSTGUT00000024880.1">
    <property type="protein sequence ID" value="ENSTGUP00000037725.1"/>
    <property type="gene ID" value="ENSTGUG00000029136.1"/>
</dbReference>
<dbReference type="GeneID" id="100189938"/>
<dbReference type="KEGG" id="tgu:100189938"/>
<dbReference type="CTD" id="54976"/>
<dbReference type="GeneTree" id="ENSGT00390000008711"/>
<dbReference type="InParanoid" id="B5FX50"/>
<dbReference type="OMA" id="GVRCIGM"/>
<dbReference type="OrthoDB" id="6246153at2759"/>
<dbReference type="Proteomes" id="UP000007754">
    <property type="component" value="Chromosome 4"/>
</dbReference>
<dbReference type="GO" id="GO:0005615">
    <property type="term" value="C:extracellular space"/>
    <property type="evidence" value="ECO:0000250"/>
    <property type="project" value="UniProtKB"/>
</dbReference>
<dbReference type="GO" id="GO:0008157">
    <property type="term" value="F:protein phosphatase 1 binding"/>
    <property type="evidence" value="ECO:0007669"/>
    <property type="project" value="Ensembl"/>
</dbReference>
<dbReference type="GO" id="GO:1901224">
    <property type="term" value="P:positive regulation of non-canonical NF-kappaB signal transduction"/>
    <property type="evidence" value="ECO:0007669"/>
    <property type="project" value="Ensembl"/>
</dbReference>
<dbReference type="GO" id="GO:0030511">
    <property type="term" value="P:positive regulation of transforming growth factor beta receptor signaling pathway"/>
    <property type="evidence" value="ECO:0007669"/>
    <property type="project" value="Ensembl"/>
</dbReference>
<dbReference type="InterPro" id="IPR026794">
    <property type="entry name" value="ADISSP"/>
</dbReference>
<dbReference type="PANTHER" id="PTHR13287">
    <property type="entry name" value="ADIPOSE-SECRETED SIGNALING PROTEIN"/>
    <property type="match status" value="1"/>
</dbReference>
<dbReference type="PANTHER" id="PTHR13287:SF2">
    <property type="entry name" value="ADIPOSE-SECRETED SIGNALING PROTEIN"/>
    <property type="match status" value="1"/>
</dbReference>
<dbReference type="Pfam" id="PF15006">
    <property type="entry name" value="DUF4517"/>
    <property type="match status" value="1"/>
</dbReference>
<reference key="1">
    <citation type="journal article" date="2006" name="Proc. Natl. Acad. Sci. U.S.A.">
        <title>A molecular neuroethological approach for identifying and characterizing a cascade of behaviorally regulated genes.</title>
        <authorList>
            <person name="Wada K."/>
            <person name="Howard J.T."/>
            <person name="McConnell P."/>
            <person name="Whitney O."/>
            <person name="Lints T."/>
            <person name="Rivas M.V."/>
            <person name="Horita H."/>
            <person name="Patterson M.A."/>
            <person name="White S.A."/>
            <person name="Scharff C."/>
            <person name="Haesler S."/>
            <person name="Zhao S."/>
            <person name="Sakaguchi H."/>
            <person name="Hagiwara M."/>
            <person name="Shiraki T."/>
            <person name="Hirozane-Kishikawa T."/>
            <person name="Skene P."/>
            <person name="Hayashizaki Y."/>
            <person name="Carninci P."/>
            <person name="Jarvis E.D."/>
        </authorList>
    </citation>
    <scope>NUCLEOTIDE SEQUENCE [LARGE SCALE MRNA]</scope>
    <source>
        <tissue>Brain</tissue>
    </source>
</reference>